<reference key="1">
    <citation type="journal article" date="2005" name="Nucleic Acids Res.">
        <title>Genome dynamics and diversity of Shigella species, the etiologic agents of bacillary dysentery.</title>
        <authorList>
            <person name="Yang F."/>
            <person name="Yang J."/>
            <person name="Zhang X."/>
            <person name="Chen L."/>
            <person name="Jiang Y."/>
            <person name="Yan Y."/>
            <person name="Tang X."/>
            <person name="Wang J."/>
            <person name="Xiong Z."/>
            <person name="Dong J."/>
            <person name="Xue Y."/>
            <person name="Zhu Y."/>
            <person name="Xu X."/>
            <person name="Sun L."/>
            <person name="Chen S."/>
            <person name="Nie H."/>
            <person name="Peng J."/>
            <person name="Xu J."/>
            <person name="Wang Y."/>
            <person name="Yuan Z."/>
            <person name="Wen Y."/>
            <person name="Yao Z."/>
            <person name="Shen Y."/>
            <person name="Qiang B."/>
            <person name="Hou Y."/>
            <person name="Yu J."/>
            <person name="Jin Q."/>
        </authorList>
    </citation>
    <scope>NUCLEOTIDE SEQUENCE [LARGE SCALE GENOMIC DNA]</scope>
    <source>
        <strain>Ss046</strain>
    </source>
</reference>
<sequence length="251" mass="28383">MKKAGLLFLVMIVIAVVAAGIGYWKLTGEESDTLRKIVLEECLPNQQQNQNPSPCAEVKPNAGYVVLKDLNGPLQYLLMPTYRINGTESPLLTDPSTPNFFWLAWQARDFMSKKYGQPVPDRAVSLAINSRTGRTQNHFHIHISCIRPDVREQLDNNLANISSRWLPLPGGLRGHEYLARRVTESELVQRSPFMMLAEEVPEAREHMGSYGLAMVRQSDNSFVLLATQRNLLTLNRASAEEIQDHQCEILR</sequence>
<organism>
    <name type="scientific">Shigella sonnei (strain Ss046)</name>
    <dbReference type="NCBI Taxonomy" id="300269"/>
    <lineage>
        <taxon>Bacteria</taxon>
        <taxon>Pseudomonadati</taxon>
        <taxon>Pseudomonadota</taxon>
        <taxon>Gammaproteobacteria</taxon>
        <taxon>Enterobacterales</taxon>
        <taxon>Enterobacteriaceae</taxon>
        <taxon>Shigella</taxon>
    </lineage>
</organism>
<evidence type="ECO:0000255" key="1">
    <source>
        <dbReference type="HAMAP-Rule" id="MF_00319"/>
    </source>
</evidence>
<comment type="catalytic activity">
    <reaction evidence="1">
        <text>a CDP-1,2-diacyl-sn-glycerol + H2O = a 1,2-diacyl-sn-glycero-3-phosphate + CMP + 2 H(+)</text>
        <dbReference type="Rhea" id="RHEA:15221"/>
        <dbReference type="ChEBI" id="CHEBI:15377"/>
        <dbReference type="ChEBI" id="CHEBI:15378"/>
        <dbReference type="ChEBI" id="CHEBI:58332"/>
        <dbReference type="ChEBI" id="CHEBI:58608"/>
        <dbReference type="ChEBI" id="CHEBI:60377"/>
        <dbReference type="EC" id="3.6.1.26"/>
    </reaction>
</comment>
<comment type="pathway">
    <text evidence="1">Phospholipid metabolism; CDP-diacylglycerol degradation; phosphatidate from CDP-diacylglycerol: step 1/1.</text>
</comment>
<comment type="subcellular location">
    <subcellularLocation>
        <location evidence="1">Cell inner membrane</location>
        <topology evidence="1">Single-pass membrane protein</topology>
    </subcellularLocation>
</comment>
<comment type="similarity">
    <text evidence="1">Belongs to the Cdh family.</text>
</comment>
<proteinExistence type="inferred from homology"/>
<gene>
    <name evidence="1" type="primary">cdh</name>
    <name type="ordered locus">SSON_4087</name>
</gene>
<dbReference type="EC" id="3.6.1.26" evidence="1"/>
<dbReference type="EMBL" id="CP000038">
    <property type="protein sequence ID" value="AAZ90602.1"/>
    <property type="molecule type" value="Genomic_DNA"/>
</dbReference>
<dbReference type="RefSeq" id="WP_000708998.1">
    <property type="nucleotide sequence ID" value="NC_007384.1"/>
</dbReference>
<dbReference type="SMR" id="Q3YV60"/>
<dbReference type="GeneID" id="93777980"/>
<dbReference type="KEGG" id="ssn:SSON_4087"/>
<dbReference type="HOGENOM" id="CLU_077117_0_1_6"/>
<dbReference type="UniPathway" id="UPA00609">
    <property type="reaction ID" value="UER00664"/>
</dbReference>
<dbReference type="Proteomes" id="UP000002529">
    <property type="component" value="Chromosome"/>
</dbReference>
<dbReference type="GO" id="GO:0005886">
    <property type="term" value="C:plasma membrane"/>
    <property type="evidence" value="ECO:0007669"/>
    <property type="project" value="UniProtKB-SubCell"/>
</dbReference>
<dbReference type="GO" id="GO:0008715">
    <property type="term" value="F:CDP-diacylglycerol diphosphatase activity"/>
    <property type="evidence" value="ECO:0007669"/>
    <property type="project" value="UniProtKB-UniRule"/>
</dbReference>
<dbReference type="GO" id="GO:0046342">
    <property type="term" value="P:CDP-diacylglycerol catabolic process"/>
    <property type="evidence" value="ECO:0007669"/>
    <property type="project" value="UniProtKB-UniRule"/>
</dbReference>
<dbReference type="GO" id="GO:0008654">
    <property type="term" value="P:phospholipid biosynthetic process"/>
    <property type="evidence" value="ECO:0007669"/>
    <property type="project" value="UniProtKB-KW"/>
</dbReference>
<dbReference type="FunFam" id="3.30.428.30:FF:000001">
    <property type="entry name" value="CDP-diacylglycerol pyrophosphatase"/>
    <property type="match status" value="1"/>
</dbReference>
<dbReference type="Gene3D" id="3.30.428.30">
    <property type="entry name" value="HIT family - CDH-like"/>
    <property type="match status" value="1"/>
</dbReference>
<dbReference type="HAMAP" id="MF_00319">
    <property type="entry name" value="Cdh"/>
    <property type="match status" value="1"/>
</dbReference>
<dbReference type="InterPro" id="IPR003763">
    <property type="entry name" value="CDP-diacylglyc_Pase"/>
</dbReference>
<dbReference type="InterPro" id="IPR015993">
    <property type="entry name" value="CDP-diacylglyc_Pase_proteobac"/>
</dbReference>
<dbReference type="InterPro" id="IPR036265">
    <property type="entry name" value="HIT-like_sf"/>
</dbReference>
<dbReference type="NCBIfam" id="TIGR00672">
    <property type="entry name" value="cdh"/>
    <property type="match status" value="1"/>
</dbReference>
<dbReference type="NCBIfam" id="NF003986">
    <property type="entry name" value="PRK05471.1-5"/>
    <property type="match status" value="1"/>
</dbReference>
<dbReference type="NCBIfam" id="NF003987">
    <property type="entry name" value="PRK05471.1-6"/>
    <property type="match status" value="1"/>
</dbReference>
<dbReference type="Pfam" id="PF02611">
    <property type="entry name" value="CDH"/>
    <property type="match status" value="1"/>
</dbReference>
<dbReference type="PIRSF" id="PIRSF001273">
    <property type="entry name" value="CDH"/>
    <property type="match status" value="1"/>
</dbReference>
<dbReference type="SUPFAM" id="SSF54197">
    <property type="entry name" value="HIT-like"/>
    <property type="match status" value="1"/>
</dbReference>
<name>CDH_SHISS</name>
<protein>
    <recommendedName>
        <fullName evidence="1">CDP-diacylglycerol pyrophosphatase</fullName>
        <ecNumber evidence="1">3.6.1.26</ecNumber>
    </recommendedName>
    <alternativeName>
        <fullName evidence="1">CDP-diacylglycerol phosphatidylhydrolase</fullName>
    </alternativeName>
    <alternativeName>
        <fullName evidence="1">CDP-diglyceride hydrolase</fullName>
    </alternativeName>
</protein>
<accession>Q3YV60</accession>
<keyword id="KW-0997">Cell inner membrane</keyword>
<keyword id="KW-1003">Cell membrane</keyword>
<keyword id="KW-0378">Hydrolase</keyword>
<keyword id="KW-0444">Lipid biosynthesis</keyword>
<keyword id="KW-0443">Lipid metabolism</keyword>
<keyword id="KW-0472">Membrane</keyword>
<keyword id="KW-0594">Phospholipid biosynthesis</keyword>
<keyword id="KW-1208">Phospholipid metabolism</keyword>
<keyword id="KW-1185">Reference proteome</keyword>
<keyword id="KW-0812">Transmembrane</keyword>
<keyword id="KW-1133">Transmembrane helix</keyword>
<feature type="chain" id="PRO_1000019269" description="CDP-diacylglycerol pyrophosphatase">
    <location>
        <begin position="1"/>
        <end position="251"/>
    </location>
</feature>
<feature type="transmembrane region" description="Helical" evidence="1">
    <location>
        <begin position="4"/>
        <end position="24"/>
    </location>
</feature>